<feature type="chain" id="PRO_0000383940" description="Queuine tRNA-ribosyltransferase accessory subunit 2">
    <location>
        <begin position="1"/>
        <end position="418"/>
    </location>
</feature>
<feature type="binding site" evidence="1">
    <location>
        <position position="325"/>
    </location>
    <ligand>
        <name>Zn(2+)</name>
        <dbReference type="ChEBI" id="CHEBI:29105"/>
    </ligand>
</feature>
<feature type="binding site" evidence="1">
    <location>
        <position position="327"/>
    </location>
    <ligand>
        <name>Zn(2+)</name>
        <dbReference type="ChEBI" id="CHEBI:29105"/>
    </ligand>
</feature>
<feature type="binding site" evidence="1">
    <location>
        <position position="330"/>
    </location>
    <ligand>
        <name>Zn(2+)</name>
        <dbReference type="ChEBI" id="CHEBI:29105"/>
    </ligand>
</feature>
<feature type="binding site" evidence="1">
    <location>
        <position position="356"/>
    </location>
    <ligand>
        <name>Zn(2+)</name>
        <dbReference type="ChEBI" id="CHEBI:29105"/>
    </ligand>
</feature>
<reference key="1">
    <citation type="journal article" date="2007" name="Nature">
        <title>Evolution of genes and genomes on the Drosophila phylogeny.</title>
        <authorList>
            <consortium name="Drosophila 12 genomes consortium"/>
        </authorList>
    </citation>
    <scope>NUCLEOTIDE SEQUENCE [LARGE SCALE GENOMIC DNA]</scope>
    <source>
        <strain>Rob3c / Tucson 14021-0248.25</strain>
    </source>
</reference>
<accession>B4HL48</accession>
<gene>
    <name type="ORF">GM24868</name>
</gene>
<protein>
    <recommendedName>
        <fullName evidence="1">Queuine tRNA-ribosyltransferase accessory subunit 2</fullName>
    </recommendedName>
    <alternativeName>
        <fullName evidence="1">Queuine tRNA-ribosyltransferase domain-containing protein 1</fullName>
    </alternativeName>
</protein>
<keyword id="KW-0963">Cytoplasm</keyword>
<keyword id="KW-0479">Metal-binding</keyword>
<keyword id="KW-1185">Reference proteome</keyword>
<keyword id="KW-0819">tRNA processing</keyword>
<keyword id="KW-0862">Zinc</keyword>
<evidence type="ECO:0000255" key="1">
    <source>
        <dbReference type="HAMAP-Rule" id="MF_03043"/>
    </source>
</evidence>
<comment type="function">
    <text evidence="1">Non-catalytic subunit of the queuine tRNA-ribosyltransferase (TGT) that catalyzes the base-exchange of a guanine (G) residue with queuine (Q) at position 34 (anticodon wobble position) in tRNAs with GU(N) anticodons (tRNA-Asp, -Asn, -His and -Tyr), resulting in the hypermodified nucleoside queuosine (7-(((4,5-cis-dihydroxy-2-cyclopenten-1-yl)amino)methyl)-7-deazaguanosine).</text>
</comment>
<comment type="cofactor">
    <cofactor evidence="1">
        <name>Zn(2+)</name>
        <dbReference type="ChEBI" id="CHEBI:29105"/>
    </cofactor>
    <text evidence="1">Binds 1 zinc ion per subunit.</text>
</comment>
<comment type="subunit">
    <text evidence="1">Heterodimer of a catalytic subunit and an accessory subunit.</text>
</comment>
<comment type="subcellular location">
    <subcellularLocation>
        <location evidence="1">Cytoplasm</location>
    </subcellularLocation>
</comment>
<comment type="similarity">
    <text evidence="1">Belongs to the queuine tRNA-ribosyltransferase family. QTRT2 subfamily.</text>
</comment>
<name>QTRT2_DROSE</name>
<dbReference type="EMBL" id="CH480815">
    <property type="protein sequence ID" value="EDW40867.1"/>
    <property type="molecule type" value="Genomic_DNA"/>
</dbReference>
<dbReference type="SMR" id="B4HL48"/>
<dbReference type="STRING" id="7238.B4HL48"/>
<dbReference type="EnsemblMetazoa" id="FBtr0207853">
    <property type="protein sequence ID" value="FBpp0206345"/>
    <property type="gene ID" value="FBgn0179730"/>
</dbReference>
<dbReference type="EnsemblMetazoa" id="XM_002029845.2">
    <property type="protein sequence ID" value="XP_002029881.1"/>
    <property type="gene ID" value="LOC6605039"/>
</dbReference>
<dbReference type="GeneID" id="6605039"/>
<dbReference type="KEGG" id="dse:6605039"/>
<dbReference type="HOGENOM" id="CLU_037350_0_0_1"/>
<dbReference type="OMA" id="VPHIAHD"/>
<dbReference type="OrthoDB" id="11025at7215"/>
<dbReference type="PhylomeDB" id="B4HL48"/>
<dbReference type="Proteomes" id="UP000001292">
    <property type="component" value="Unassembled WGS sequence"/>
</dbReference>
<dbReference type="GO" id="GO:0005737">
    <property type="term" value="C:cytoplasm"/>
    <property type="evidence" value="ECO:0007669"/>
    <property type="project" value="UniProtKB-SubCell"/>
</dbReference>
<dbReference type="GO" id="GO:0046872">
    <property type="term" value="F:metal ion binding"/>
    <property type="evidence" value="ECO:0007669"/>
    <property type="project" value="UniProtKB-KW"/>
</dbReference>
<dbReference type="GO" id="GO:0008479">
    <property type="term" value="F:tRNA-guanosine(34) queuine transglycosylase activity"/>
    <property type="evidence" value="ECO:0007669"/>
    <property type="project" value="UniProtKB-UniRule"/>
</dbReference>
<dbReference type="GO" id="GO:0101030">
    <property type="term" value="P:tRNA-guanine transglycosylation"/>
    <property type="evidence" value="ECO:0007669"/>
    <property type="project" value="UniProtKB-UniRule"/>
</dbReference>
<dbReference type="FunFam" id="3.20.20.105:FF:000008">
    <property type="entry name" value="Queuine tRNA-ribosyltransferase accessory subunit 2"/>
    <property type="match status" value="1"/>
</dbReference>
<dbReference type="Gene3D" id="3.20.20.105">
    <property type="entry name" value="Queuine tRNA-ribosyltransferase-like"/>
    <property type="match status" value="1"/>
</dbReference>
<dbReference type="HAMAP" id="MF_03043">
    <property type="entry name" value="QTRT2"/>
    <property type="match status" value="1"/>
</dbReference>
<dbReference type="InterPro" id="IPR028592">
    <property type="entry name" value="QTRTD1"/>
</dbReference>
<dbReference type="InterPro" id="IPR050852">
    <property type="entry name" value="Queuine_tRNA-ribosyltrfase"/>
</dbReference>
<dbReference type="InterPro" id="IPR036511">
    <property type="entry name" value="TGT-like_sf"/>
</dbReference>
<dbReference type="InterPro" id="IPR002616">
    <property type="entry name" value="tRNA_ribo_trans-like"/>
</dbReference>
<dbReference type="NCBIfam" id="TIGR00449">
    <property type="entry name" value="tgt_general"/>
    <property type="match status" value="1"/>
</dbReference>
<dbReference type="PANTHER" id="PTHR46064">
    <property type="entry name" value="QUEUINE TRNA-RIBOSYLTRANSFERASE ACCESSORY SUBUNIT 2"/>
    <property type="match status" value="1"/>
</dbReference>
<dbReference type="PANTHER" id="PTHR46064:SF1">
    <property type="entry name" value="QUEUINE TRNA-RIBOSYLTRANSFERASE ACCESSORY SUBUNIT 2"/>
    <property type="match status" value="1"/>
</dbReference>
<dbReference type="Pfam" id="PF01702">
    <property type="entry name" value="TGT"/>
    <property type="match status" value="1"/>
</dbReference>
<dbReference type="SUPFAM" id="SSF51713">
    <property type="entry name" value="tRNA-guanine transglycosylase"/>
    <property type="match status" value="1"/>
</dbReference>
<organism>
    <name type="scientific">Drosophila sechellia</name>
    <name type="common">Fruit fly</name>
    <dbReference type="NCBI Taxonomy" id="7238"/>
    <lineage>
        <taxon>Eukaryota</taxon>
        <taxon>Metazoa</taxon>
        <taxon>Ecdysozoa</taxon>
        <taxon>Arthropoda</taxon>
        <taxon>Hexapoda</taxon>
        <taxon>Insecta</taxon>
        <taxon>Pterygota</taxon>
        <taxon>Neoptera</taxon>
        <taxon>Endopterygota</taxon>
        <taxon>Diptera</taxon>
        <taxon>Brachycera</taxon>
        <taxon>Muscomorpha</taxon>
        <taxon>Ephydroidea</taxon>
        <taxon>Drosophilidae</taxon>
        <taxon>Drosophila</taxon>
        <taxon>Sophophora</taxon>
    </lineage>
</organism>
<proteinExistence type="inferred from homology"/>
<sequence>MKFAIESISKNSGRLGQLRIKDGGPEFKTPLLLQTTKGGSIPWLSADVFETQVSRKPQVLQFTLSTMEQMTEALTHWNSGGGRGLSDYVGLPGHLNILLLRDPCETTPSGGNDRDILPLFTRRGKESLSAERYMEIVASFKPDMYEGLCDADTNLESAKKRVQKSVDRTEKFMHYIYEHRGKVNSTLLAPIVGGYNTFARTQSIKHAREQPAGSYGGYIFEGFHTNGLSATTLDTSELLPIVEHCVKQLEEDKPRILPGAYTPLTILELIQQGIDVFDTSYAYCASLNFKALTFSFVQDAVEHVPFLDITDEAIKEDFNPPLSNCNCLTCQKHTRAYLHHLYKTNELLGPILLMVHNLYHYMDFFEKIRESVAKDTLPQLTELVRNQNGKTQVDYSIAANTKVISKATMEKGFAAAAV</sequence>